<organism>
    <name type="scientific">Bacillus subtilis (strain 168)</name>
    <dbReference type="NCBI Taxonomy" id="224308"/>
    <lineage>
        <taxon>Bacteria</taxon>
        <taxon>Bacillati</taxon>
        <taxon>Bacillota</taxon>
        <taxon>Bacilli</taxon>
        <taxon>Bacillales</taxon>
        <taxon>Bacillaceae</taxon>
        <taxon>Bacillus</taxon>
    </lineage>
</organism>
<protein>
    <recommendedName>
        <fullName>SPbeta prophage-derived uncharacterized protein YonB</fullName>
    </recommendedName>
</protein>
<sequence length="338" mass="37199">MKLDTVKIKGLFSRVLNNKMDGTDKADIQTYIKKVFGDGGTTPDPSMLHQFNNLVVEQADEIAKPKVTQLLSLLANVQQEKRGNIKEIKIPKKNKAKVIWSATGSGVDLVRVEGQETVPAVPKTMSTGFYYEPLDLVTDSIVYFNKLVNDIADAKVRLYLDKIHQLTASAITAGKIPAKNVQTGSNLTLQQYNKVASVLQRYGGKPIFVADTLLIDYFAFQQGTDSTFKNFLTEEVKGELLTALNPTTIGRTTAVNLTNPFTDDTNSKVELPVNKGYMFAGGVSQKPFSVVEYGGLRQLTEQDIEDERIKMKIVQDASVNLLFGEAIGIIEEQAAVSI</sequence>
<keyword id="KW-1185">Reference proteome</keyword>
<proteinExistence type="predicted"/>
<accession>O31956</accession>
<gene>
    <name type="primary">yonB</name>
    <name type="ordered locus">BSU21150</name>
</gene>
<name>YONB_BACSU</name>
<reference key="1">
    <citation type="journal article" date="1997" name="Nature">
        <title>The complete genome sequence of the Gram-positive bacterium Bacillus subtilis.</title>
        <authorList>
            <person name="Kunst F."/>
            <person name="Ogasawara N."/>
            <person name="Moszer I."/>
            <person name="Albertini A.M."/>
            <person name="Alloni G."/>
            <person name="Azevedo V."/>
            <person name="Bertero M.G."/>
            <person name="Bessieres P."/>
            <person name="Bolotin A."/>
            <person name="Borchert S."/>
            <person name="Borriss R."/>
            <person name="Boursier L."/>
            <person name="Brans A."/>
            <person name="Braun M."/>
            <person name="Brignell S.C."/>
            <person name="Bron S."/>
            <person name="Brouillet S."/>
            <person name="Bruschi C.V."/>
            <person name="Caldwell B."/>
            <person name="Capuano V."/>
            <person name="Carter N.M."/>
            <person name="Choi S.-K."/>
            <person name="Codani J.-J."/>
            <person name="Connerton I.F."/>
            <person name="Cummings N.J."/>
            <person name="Daniel R.A."/>
            <person name="Denizot F."/>
            <person name="Devine K.M."/>
            <person name="Duesterhoeft A."/>
            <person name="Ehrlich S.D."/>
            <person name="Emmerson P.T."/>
            <person name="Entian K.-D."/>
            <person name="Errington J."/>
            <person name="Fabret C."/>
            <person name="Ferrari E."/>
            <person name="Foulger D."/>
            <person name="Fritz C."/>
            <person name="Fujita M."/>
            <person name="Fujita Y."/>
            <person name="Fuma S."/>
            <person name="Galizzi A."/>
            <person name="Galleron N."/>
            <person name="Ghim S.-Y."/>
            <person name="Glaser P."/>
            <person name="Goffeau A."/>
            <person name="Golightly E.J."/>
            <person name="Grandi G."/>
            <person name="Guiseppi G."/>
            <person name="Guy B.J."/>
            <person name="Haga K."/>
            <person name="Haiech J."/>
            <person name="Harwood C.R."/>
            <person name="Henaut A."/>
            <person name="Hilbert H."/>
            <person name="Holsappel S."/>
            <person name="Hosono S."/>
            <person name="Hullo M.-F."/>
            <person name="Itaya M."/>
            <person name="Jones L.-M."/>
            <person name="Joris B."/>
            <person name="Karamata D."/>
            <person name="Kasahara Y."/>
            <person name="Klaerr-Blanchard M."/>
            <person name="Klein C."/>
            <person name="Kobayashi Y."/>
            <person name="Koetter P."/>
            <person name="Koningstein G."/>
            <person name="Krogh S."/>
            <person name="Kumano M."/>
            <person name="Kurita K."/>
            <person name="Lapidus A."/>
            <person name="Lardinois S."/>
            <person name="Lauber J."/>
            <person name="Lazarevic V."/>
            <person name="Lee S.-M."/>
            <person name="Levine A."/>
            <person name="Liu H."/>
            <person name="Masuda S."/>
            <person name="Mauel C."/>
            <person name="Medigue C."/>
            <person name="Medina N."/>
            <person name="Mellado R.P."/>
            <person name="Mizuno M."/>
            <person name="Moestl D."/>
            <person name="Nakai S."/>
            <person name="Noback M."/>
            <person name="Noone D."/>
            <person name="O'Reilly M."/>
            <person name="Ogawa K."/>
            <person name="Ogiwara A."/>
            <person name="Oudega B."/>
            <person name="Park S.-H."/>
            <person name="Parro V."/>
            <person name="Pohl T.M."/>
            <person name="Portetelle D."/>
            <person name="Porwollik S."/>
            <person name="Prescott A.M."/>
            <person name="Presecan E."/>
            <person name="Pujic P."/>
            <person name="Purnelle B."/>
            <person name="Rapoport G."/>
            <person name="Rey M."/>
            <person name="Reynolds S."/>
            <person name="Rieger M."/>
            <person name="Rivolta C."/>
            <person name="Rocha E."/>
            <person name="Roche B."/>
            <person name="Rose M."/>
            <person name="Sadaie Y."/>
            <person name="Sato T."/>
            <person name="Scanlan E."/>
            <person name="Schleich S."/>
            <person name="Schroeter R."/>
            <person name="Scoffone F."/>
            <person name="Sekiguchi J."/>
            <person name="Sekowska A."/>
            <person name="Seror S.J."/>
            <person name="Serror P."/>
            <person name="Shin B.-S."/>
            <person name="Soldo B."/>
            <person name="Sorokin A."/>
            <person name="Tacconi E."/>
            <person name="Takagi T."/>
            <person name="Takahashi H."/>
            <person name="Takemaru K."/>
            <person name="Takeuchi M."/>
            <person name="Tamakoshi A."/>
            <person name="Tanaka T."/>
            <person name="Terpstra P."/>
            <person name="Tognoni A."/>
            <person name="Tosato V."/>
            <person name="Uchiyama S."/>
            <person name="Vandenbol M."/>
            <person name="Vannier F."/>
            <person name="Vassarotti A."/>
            <person name="Viari A."/>
            <person name="Wambutt R."/>
            <person name="Wedler E."/>
            <person name="Wedler H."/>
            <person name="Weitzenegger T."/>
            <person name="Winters P."/>
            <person name="Wipat A."/>
            <person name="Yamamoto H."/>
            <person name="Yamane K."/>
            <person name="Yasumoto K."/>
            <person name="Yata K."/>
            <person name="Yoshida K."/>
            <person name="Yoshikawa H.-F."/>
            <person name="Zumstein E."/>
            <person name="Yoshikawa H."/>
            <person name="Danchin A."/>
        </authorList>
    </citation>
    <scope>NUCLEOTIDE SEQUENCE [LARGE SCALE GENOMIC DNA]</scope>
    <source>
        <strain>168</strain>
    </source>
</reference>
<feature type="chain" id="PRO_0000360604" description="SPbeta prophage-derived uncharacterized protein YonB">
    <location>
        <begin position="1"/>
        <end position="338"/>
    </location>
</feature>
<dbReference type="EMBL" id="AL009126">
    <property type="protein sequence ID" value="CAB14033.1"/>
    <property type="molecule type" value="Genomic_DNA"/>
</dbReference>
<dbReference type="RefSeq" id="NP_389998.1">
    <property type="nucleotide sequence ID" value="NC_000964.3"/>
</dbReference>
<dbReference type="RefSeq" id="WP_004399434.1">
    <property type="nucleotide sequence ID" value="NZ_OZ025638.1"/>
</dbReference>
<dbReference type="FunCoup" id="O31956">
    <property type="interactions" value="43"/>
</dbReference>
<dbReference type="STRING" id="224308.BSU21150"/>
<dbReference type="PaxDb" id="224308-BSU21150"/>
<dbReference type="EnsemblBacteria" id="CAB14033">
    <property type="protein sequence ID" value="CAB14033"/>
    <property type="gene ID" value="BSU_21150"/>
</dbReference>
<dbReference type="GeneID" id="939155"/>
<dbReference type="KEGG" id="bsu:BSU21150"/>
<dbReference type="PATRIC" id="fig|224308.179.peg.2309"/>
<dbReference type="eggNOG" id="ENOG5030DRU">
    <property type="taxonomic scope" value="Bacteria"/>
</dbReference>
<dbReference type="InParanoid" id="O31956"/>
<dbReference type="OrthoDB" id="2912943at2"/>
<dbReference type="BioCyc" id="BSUB:BSU21150-MONOMER"/>
<dbReference type="Proteomes" id="UP000001570">
    <property type="component" value="Chromosome"/>
</dbReference>